<proteinExistence type="inferred from homology"/>
<protein>
    <recommendedName>
        <fullName>Putative Bro-N domain-containing protein 201R</fullName>
    </recommendedName>
</protein>
<comment type="similarity">
    <text evidence="3">Belongs to the IIV-6 201R/289L family.</text>
</comment>
<keyword id="KW-0175">Coiled coil</keyword>
<keyword id="KW-1185">Reference proteome</keyword>
<evidence type="ECO:0000255" key="1"/>
<evidence type="ECO:0000255" key="2">
    <source>
        <dbReference type="PROSITE-ProRule" id="PRU01086"/>
    </source>
</evidence>
<evidence type="ECO:0000305" key="3"/>
<dbReference type="EMBL" id="AF303741">
    <property type="protein sequence ID" value="AAK82063.1"/>
    <property type="molecule type" value="Genomic_DNA"/>
</dbReference>
<dbReference type="RefSeq" id="NP_149664.1">
    <property type="nucleotide sequence ID" value="NC_003038.1"/>
</dbReference>
<dbReference type="SMR" id="Q91FW9"/>
<dbReference type="KEGG" id="vg:1733199"/>
<dbReference type="OrthoDB" id="5682at10239"/>
<dbReference type="Proteomes" id="UP000001359">
    <property type="component" value="Genome"/>
</dbReference>
<dbReference type="InterPro" id="IPR003497">
    <property type="entry name" value="BRO_N_domain"/>
</dbReference>
<dbReference type="InterPro" id="IPR018306">
    <property type="entry name" value="Phage_T5_Orf172_DNA-bd"/>
</dbReference>
<dbReference type="PANTHER" id="PTHR36180:SF2">
    <property type="entry name" value="BRO FAMILY PROTEIN"/>
    <property type="match status" value="1"/>
</dbReference>
<dbReference type="PANTHER" id="PTHR36180">
    <property type="entry name" value="DNA-BINDING PROTEIN-RELATED-RELATED"/>
    <property type="match status" value="1"/>
</dbReference>
<dbReference type="Pfam" id="PF02498">
    <property type="entry name" value="Bro-N"/>
    <property type="match status" value="1"/>
</dbReference>
<dbReference type="Pfam" id="PF10544">
    <property type="entry name" value="T5orf172"/>
    <property type="match status" value="1"/>
</dbReference>
<dbReference type="SMART" id="SM01040">
    <property type="entry name" value="Bro-N"/>
    <property type="match status" value="1"/>
</dbReference>
<dbReference type="PROSITE" id="PS51750">
    <property type="entry name" value="BRO_N"/>
    <property type="match status" value="1"/>
</dbReference>
<feature type="chain" id="PRO_0000378023" description="Putative Bro-N domain-containing protein 201R">
    <location>
        <begin position="1"/>
        <end position="419"/>
    </location>
</feature>
<feature type="domain" description="Bro-N" evidence="2">
    <location>
        <begin position="4"/>
        <end position="136"/>
    </location>
</feature>
<feature type="coiled-coil region" evidence="1">
    <location>
        <begin position="150"/>
        <end position="195"/>
    </location>
</feature>
<reference key="1">
    <citation type="journal article" date="2001" name="Virology">
        <title>Analysis of the first complete DNA sequence of an invertebrate iridovirus: coding strategy of the genome of Chilo iridescent virus.</title>
        <authorList>
            <person name="Jakob N.J."/>
            <person name="Mueller K."/>
            <person name="Bahr U."/>
            <person name="Darai G."/>
        </authorList>
    </citation>
    <scope>NUCLEOTIDE SEQUENCE [LARGE SCALE GENOMIC DNA]</scope>
</reference>
<reference key="2">
    <citation type="journal article" date="2007" name="Virol. J.">
        <title>Comparative genomic analysis of the family Iridoviridae: re-annotating and defining the core set of iridovirus genes.</title>
        <authorList>
            <person name="Eaton H.E."/>
            <person name="Metcalf J."/>
            <person name="Penny E."/>
            <person name="Tcherepanov V."/>
            <person name="Upton C."/>
            <person name="Brunetti C.R."/>
        </authorList>
    </citation>
    <scope>GENOME REANNOTATION</scope>
</reference>
<gene>
    <name type="ORF">IIV6-201R</name>
</gene>
<organismHost>
    <name type="scientific">Acheta domesticus</name>
    <name type="common">House cricket</name>
    <dbReference type="NCBI Taxonomy" id="6997"/>
</organismHost>
<organismHost>
    <name type="scientific">Chilo suppressalis</name>
    <name type="common">Asiatic rice borer moth</name>
    <dbReference type="NCBI Taxonomy" id="168631"/>
</organismHost>
<organismHost>
    <name type="scientific">Gryllus bimaculatus</name>
    <name type="common">Two-spotted cricket</name>
    <dbReference type="NCBI Taxonomy" id="6999"/>
</organismHost>
<organismHost>
    <name type="scientific">Gryllus campestris</name>
    <dbReference type="NCBI Taxonomy" id="58607"/>
</organismHost>
<organismHost>
    <name type="scientific">Spodoptera frugiperda</name>
    <name type="common">Fall armyworm</name>
    <dbReference type="NCBI Taxonomy" id="7108"/>
</organismHost>
<sequence length="419" mass="48829">MDALINLKDCKEYMTITINGNEHQIKLAGIIEDPYFCGKDVCTILGYKDKEQALRKRVKSKHKKSLSELFEKKLPVVTTGNFFLGTQNELSYHEGKSIYINEPGLYNLIMSSEAPFAEQFQDMVYEKILPSIRKYGSYSIEQKLSSAMEQLALKDKSEEELQIKLQEERIEKENAYMKLRSEAKRHKEQIKRTLEFNQATKQIEPLEYIYICTTEYYQQHHKFKVGGVQSFKDLKSRLTQYNSGESNSEAHFFIYVRKTVSYRSIEHIIKGLLSGFRENQSNELYIMHCDWLVKFLDAIMDGNAEFALLVNSNREQIALDTINKEPTILPPIKLEQIAYIRAGDEPRDLSSVLGQEMIDSIKEAIESFEPMDNTVKRKEFELHLLSKSPNVSLTGKRRDTWELTRQLGSSINPMWRYKY</sequence>
<name>VF201_IIV6</name>
<organism>
    <name type="scientific">Invertebrate iridescent virus 6</name>
    <name type="common">IIV-6</name>
    <name type="synonym">Chilo iridescent virus</name>
    <dbReference type="NCBI Taxonomy" id="176652"/>
    <lineage>
        <taxon>Viruses</taxon>
        <taxon>Varidnaviria</taxon>
        <taxon>Bamfordvirae</taxon>
        <taxon>Nucleocytoviricota</taxon>
        <taxon>Megaviricetes</taxon>
        <taxon>Pimascovirales</taxon>
        <taxon>Iridoviridae</taxon>
        <taxon>Betairidovirinae</taxon>
        <taxon>Iridovirus</taxon>
    </lineage>
</organism>
<accession>Q91FW9</accession>